<name>RS17_HALH5</name>
<proteinExistence type="inferred from homology"/>
<organism>
    <name type="scientific">Halalkalibacterium halodurans (strain ATCC BAA-125 / DSM 18197 / FERM 7344 / JCM 9153 / C-125)</name>
    <name type="common">Bacillus halodurans</name>
    <dbReference type="NCBI Taxonomy" id="272558"/>
    <lineage>
        <taxon>Bacteria</taxon>
        <taxon>Bacillati</taxon>
        <taxon>Bacillota</taxon>
        <taxon>Bacilli</taxon>
        <taxon>Bacillales</taxon>
        <taxon>Bacillaceae</taxon>
        <taxon>Halalkalibacterium (ex Joshi et al. 2022)</taxon>
    </lineage>
</organism>
<evidence type="ECO:0000255" key="1">
    <source>
        <dbReference type="HAMAP-Rule" id="MF_01345"/>
    </source>
</evidence>
<evidence type="ECO:0000305" key="2"/>
<keyword id="KW-1185">Reference proteome</keyword>
<keyword id="KW-0687">Ribonucleoprotein</keyword>
<keyword id="KW-0689">Ribosomal protein</keyword>
<keyword id="KW-0694">RNA-binding</keyword>
<keyword id="KW-0699">rRNA-binding</keyword>
<comment type="function">
    <text evidence="1">One of the primary rRNA binding proteins, it binds specifically to the 5'-end of 16S ribosomal RNA.</text>
</comment>
<comment type="subunit">
    <text evidence="1">Part of the 30S ribosomal subunit.</text>
</comment>
<comment type="similarity">
    <text evidence="1">Belongs to the universal ribosomal protein uS17 family.</text>
</comment>
<sequence length="86" mass="10182">MERNQRKVYTGRVVSDKMDKTITVLVETYKKDRLYGKRVKYSKKFKAHDENNSAKIGDIVRIQETRPLSKDKHFRLVEIVEEAVII</sequence>
<feature type="chain" id="PRO_0000128445" description="Small ribosomal subunit protein uS17">
    <location>
        <begin position="1"/>
        <end position="86"/>
    </location>
</feature>
<reference key="1">
    <citation type="journal article" date="1999" name="Biosci. Biotechnol. Biochem.">
        <title>Sequence analysis of a 32-kb region including the major ribosomal protein gene clusters from alkaliphilic Bacillus sp. strain C-125.</title>
        <authorList>
            <person name="Takami H."/>
            <person name="Takaki Y."/>
            <person name="Nakasone K."/>
            <person name="Hirama C."/>
            <person name="Inoue A."/>
            <person name="Horikoshi K."/>
        </authorList>
    </citation>
    <scope>NUCLEOTIDE SEQUENCE [GENOMIC DNA]</scope>
    <source>
        <strain>ATCC BAA-125 / DSM 18197 / FERM 7344 / JCM 9153 / C-125</strain>
    </source>
</reference>
<reference key="2">
    <citation type="journal article" date="2000" name="Nucleic Acids Res.">
        <title>Complete genome sequence of the alkaliphilic bacterium Bacillus halodurans and genomic sequence comparison with Bacillus subtilis.</title>
        <authorList>
            <person name="Takami H."/>
            <person name="Nakasone K."/>
            <person name="Takaki Y."/>
            <person name="Maeno G."/>
            <person name="Sasaki R."/>
            <person name="Masui N."/>
            <person name="Fuji F."/>
            <person name="Hirama C."/>
            <person name="Nakamura Y."/>
            <person name="Ogasawara N."/>
            <person name="Kuhara S."/>
            <person name="Horikoshi K."/>
        </authorList>
    </citation>
    <scope>NUCLEOTIDE SEQUENCE [LARGE SCALE GENOMIC DNA]</scope>
    <source>
        <strain>ATCC BAA-125 / DSM 18197 / FERM 7344 / JCM 9153 / C-125</strain>
    </source>
</reference>
<accession>Q9Z9K5</accession>
<accession>Q9JPX8</accession>
<dbReference type="EMBL" id="AB017508">
    <property type="protein sequence ID" value="BAA75280.1"/>
    <property type="molecule type" value="Genomic_DNA"/>
</dbReference>
<dbReference type="EMBL" id="BA000004">
    <property type="protein sequence ID" value="BAB03862.1"/>
    <property type="molecule type" value="Genomic_DNA"/>
</dbReference>
<dbReference type="PIR" id="T44392">
    <property type="entry name" value="T44392"/>
</dbReference>
<dbReference type="RefSeq" id="WP_010896326.1">
    <property type="nucleotide sequence ID" value="NC_002570.2"/>
</dbReference>
<dbReference type="SMR" id="Q9Z9K5"/>
<dbReference type="STRING" id="272558.gene:10725983"/>
<dbReference type="KEGG" id="bha:BH0143"/>
<dbReference type="eggNOG" id="COG0186">
    <property type="taxonomic scope" value="Bacteria"/>
</dbReference>
<dbReference type="HOGENOM" id="CLU_073626_1_0_9"/>
<dbReference type="OrthoDB" id="9811714at2"/>
<dbReference type="Proteomes" id="UP000001258">
    <property type="component" value="Chromosome"/>
</dbReference>
<dbReference type="GO" id="GO:0022627">
    <property type="term" value="C:cytosolic small ribosomal subunit"/>
    <property type="evidence" value="ECO:0007669"/>
    <property type="project" value="TreeGrafter"/>
</dbReference>
<dbReference type="GO" id="GO:0019843">
    <property type="term" value="F:rRNA binding"/>
    <property type="evidence" value="ECO:0007669"/>
    <property type="project" value="UniProtKB-UniRule"/>
</dbReference>
<dbReference type="GO" id="GO:0003735">
    <property type="term" value="F:structural constituent of ribosome"/>
    <property type="evidence" value="ECO:0007669"/>
    <property type="project" value="InterPro"/>
</dbReference>
<dbReference type="GO" id="GO:0006412">
    <property type="term" value="P:translation"/>
    <property type="evidence" value="ECO:0007669"/>
    <property type="project" value="UniProtKB-UniRule"/>
</dbReference>
<dbReference type="CDD" id="cd00364">
    <property type="entry name" value="Ribosomal_uS17"/>
    <property type="match status" value="1"/>
</dbReference>
<dbReference type="FunFam" id="2.40.50.140:FF:000026">
    <property type="entry name" value="30S ribosomal protein S17"/>
    <property type="match status" value="1"/>
</dbReference>
<dbReference type="Gene3D" id="2.40.50.140">
    <property type="entry name" value="Nucleic acid-binding proteins"/>
    <property type="match status" value="1"/>
</dbReference>
<dbReference type="HAMAP" id="MF_01345_B">
    <property type="entry name" value="Ribosomal_uS17_B"/>
    <property type="match status" value="1"/>
</dbReference>
<dbReference type="InterPro" id="IPR012340">
    <property type="entry name" value="NA-bd_OB-fold"/>
</dbReference>
<dbReference type="InterPro" id="IPR000266">
    <property type="entry name" value="Ribosomal_uS17"/>
</dbReference>
<dbReference type="InterPro" id="IPR019984">
    <property type="entry name" value="Ribosomal_uS17_bact/chlr"/>
</dbReference>
<dbReference type="InterPro" id="IPR019979">
    <property type="entry name" value="Ribosomal_uS17_CS"/>
</dbReference>
<dbReference type="NCBIfam" id="NF004123">
    <property type="entry name" value="PRK05610.1"/>
    <property type="match status" value="1"/>
</dbReference>
<dbReference type="NCBIfam" id="TIGR03635">
    <property type="entry name" value="uS17_bact"/>
    <property type="match status" value="1"/>
</dbReference>
<dbReference type="PANTHER" id="PTHR10744">
    <property type="entry name" value="40S RIBOSOMAL PROTEIN S11 FAMILY MEMBER"/>
    <property type="match status" value="1"/>
</dbReference>
<dbReference type="PANTHER" id="PTHR10744:SF1">
    <property type="entry name" value="SMALL RIBOSOMAL SUBUNIT PROTEIN US17M"/>
    <property type="match status" value="1"/>
</dbReference>
<dbReference type="Pfam" id="PF00366">
    <property type="entry name" value="Ribosomal_S17"/>
    <property type="match status" value="1"/>
</dbReference>
<dbReference type="PRINTS" id="PR00973">
    <property type="entry name" value="RIBOSOMALS17"/>
</dbReference>
<dbReference type="SUPFAM" id="SSF50249">
    <property type="entry name" value="Nucleic acid-binding proteins"/>
    <property type="match status" value="1"/>
</dbReference>
<dbReference type="PROSITE" id="PS00056">
    <property type="entry name" value="RIBOSOMAL_S17"/>
    <property type="match status" value="1"/>
</dbReference>
<protein>
    <recommendedName>
        <fullName evidence="1">Small ribosomal subunit protein uS17</fullName>
    </recommendedName>
    <alternativeName>
        <fullName evidence="2">30S ribosomal protein S17</fullName>
    </alternativeName>
</protein>
<gene>
    <name evidence="1" type="primary">rpsQ</name>
    <name type="ordered locus">BH0143</name>
</gene>